<proteinExistence type="evidence at protein level"/>
<protein>
    <recommendedName>
        <fullName evidence="7">Intracellular coagulation inhibitor 2</fullName>
    </recommendedName>
    <alternativeName>
        <fullName evidence="6">Limulus intracellular coagulation inhibitor 2</fullName>
        <shortName evidence="6">LICI-2</shortName>
    </alternativeName>
</protein>
<dbReference type="EMBL" id="D32211">
    <property type="protein sequence ID" value="BAA06909.1"/>
    <property type="molecule type" value="mRNA"/>
</dbReference>
<dbReference type="PIR" id="A55533">
    <property type="entry name" value="A55533"/>
</dbReference>
<dbReference type="SMR" id="Q27086"/>
<dbReference type="MEROPS" id="I04.063"/>
<dbReference type="iPTMnet" id="Q27086"/>
<dbReference type="GO" id="GO:0005615">
    <property type="term" value="C:extracellular space"/>
    <property type="evidence" value="ECO:0007669"/>
    <property type="project" value="InterPro"/>
</dbReference>
<dbReference type="GO" id="GO:0030141">
    <property type="term" value="C:secretory granule"/>
    <property type="evidence" value="ECO:0000314"/>
    <property type="project" value="UniProtKB"/>
</dbReference>
<dbReference type="GO" id="GO:0004867">
    <property type="term" value="F:serine-type endopeptidase inhibitor activity"/>
    <property type="evidence" value="ECO:0000314"/>
    <property type="project" value="UniProtKB"/>
</dbReference>
<dbReference type="GO" id="GO:1900004">
    <property type="term" value="P:negative regulation of serine-type endopeptidase activity"/>
    <property type="evidence" value="ECO:0000314"/>
    <property type="project" value="UniProtKB"/>
</dbReference>
<dbReference type="CDD" id="cd19577">
    <property type="entry name" value="serpinJ_IRS-2-like"/>
    <property type="match status" value="1"/>
</dbReference>
<dbReference type="FunFam" id="3.30.497.10:FF:000031">
    <property type="entry name" value="Putative salivary serpin"/>
    <property type="match status" value="1"/>
</dbReference>
<dbReference type="FunFam" id="2.30.39.10:FF:000030">
    <property type="entry name" value="Serpin 2"/>
    <property type="match status" value="1"/>
</dbReference>
<dbReference type="Gene3D" id="2.30.39.10">
    <property type="entry name" value="Alpha-1-antitrypsin, domain 1"/>
    <property type="match status" value="1"/>
</dbReference>
<dbReference type="Gene3D" id="3.30.497.10">
    <property type="entry name" value="Antithrombin, subunit I, domain 2"/>
    <property type="match status" value="1"/>
</dbReference>
<dbReference type="InterPro" id="IPR023795">
    <property type="entry name" value="Serpin_CS"/>
</dbReference>
<dbReference type="InterPro" id="IPR023796">
    <property type="entry name" value="Serpin_dom"/>
</dbReference>
<dbReference type="InterPro" id="IPR000215">
    <property type="entry name" value="Serpin_fam"/>
</dbReference>
<dbReference type="InterPro" id="IPR036186">
    <property type="entry name" value="Serpin_sf"/>
</dbReference>
<dbReference type="InterPro" id="IPR042178">
    <property type="entry name" value="Serpin_sf_1"/>
</dbReference>
<dbReference type="InterPro" id="IPR042185">
    <property type="entry name" value="Serpin_sf_2"/>
</dbReference>
<dbReference type="PANTHER" id="PTHR11461:SF211">
    <property type="entry name" value="GH10112P-RELATED"/>
    <property type="match status" value="1"/>
</dbReference>
<dbReference type="PANTHER" id="PTHR11461">
    <property type="entry name" value="SERINE PROTEASE INHIBITOR, SERPIN"/>
    <property type="match status" value="1"/>
</dbReference>
<dbReference type="Pfam" id="PF00079">
    <property type="entry name" value="Serpin"/>
    <property type="match status" value="1"/>
</dbReference>
<dbReference type="SMART" id="SM00093">
    <property type="entry name" value="SERPIN"/>
    <property type="match status" value="1"/>
</dbReference>
<dbReference type="SUPFAM" id="SSF56574">
    <property type="entry name" value="Serpins"/>
    <property type="match status" value="1"/>
</dbReference>
<dbReference type="PROSITE" id="PS00284">
    <property type="entry name" value="SERPIN"/>
    <property type="match status" value="1"/>
</dbReference>
<comment type="function">
    <text evidence="4 5">Serine protease inhibitor that inhibits proclotting enzyme and to a lesser extent clotting factor C and clotting factor G.</text>
</comment>
<comment type="subunit">
    <text evidence="4">Monomer (PubMed:7822280). Forms a covalent heterodimer with clotting factor C chain B (PubMed:7822280). Forms a covalent heterodimer with proclotting enzyme heavy chain (PubMed:7822280).</text>
</comment>
<comment type="subcellular location">
    <subcellularLocation>
        <location evidence="4">Secreted</location>
    </subcellularLocation>
    <text evidence="4">Localizes in the large granules of hemocytes (PubMed:7822280). Secreted in hemolymph in response to external stimuli (PubMed:7822280).</text>
</comment>
<comment type="tissue specificity">
    <text evidence="4">Specifically expressed in hemocytes (at protein level).</text>
</comment>
<comment type="similarity">
    <text evidence="3">Belongs to the serpin family.</text>
</comment>
<keyword id="KW-0903">Direct protein sequencing</keyword>
<keyword id="KW-1015">Disulfide bond</keyword>
<keyword id="KW-0325">Glycoprotein</keyword>
<keyword id="KW-0646">Protease inhibitor</keyword>
<keyword id="KW-0964">Secreted</keyword>
<keyword id="KW-0722">Serine protease inhibitor</keyword>
<keyword id="KW-0732">Signal</keyword>
<accession>Q27086</accession>
<name>LICI2_TACTR</name>
<organism evidence="9">
    <name type="scientific">Tachypleus tridentatus</name>
    <name type="common">Japanese horseshoe crab</name>
    <dbReference type="NCBI Taxonomy" id="6853"/>
    <lineage>
        <taxon>Eukaryota</taxon>
        <taxon>Metazoa</taxon>
        <taxon>Ecdysozoa</taxon>
        <taxon>Arthropoda</taxon>
        <taxon>Chelicerata</taxon>
        <taxon>Merostomata</taxon>
        <taxon>Xiphosura</taxon>
        <taxon>Limulidae</taxon>
        <taxon>Tachypleus</taxon>
    </lineage>
</organism>
<feature type="signal peptide" evidence="4">
    <location>
        <begin position="1"/>
        <end position="22"/>
    </location>
</feature>
<feature type="chain" id="PRO_5004203526" description="Intracellular coagulation inhibitor 2" evidence="2">
    <location>
        <begin position="23"/>
        <end position="408"/>
    </location>
</feature>
<feature type="site" description="Reactive bond" evidence="1">
    <location>
        <begin position="372"/>
        <end position="373"/>
    </location>
</feature>
<feature type="glycosylation site" description="N-linked (GlcNAc...) asparagine" evidence="8">
    <location>
        <position position="174"/>
    </location>
</feature>
<feature type="disulfide bond" evidence="8">
    <location>
        <begin position="50"/>
        <end position="249"/>
    </location>
</feature>
<evidence type="ECO:0000250" key="1">
    <source>
        <dbReference type="UniProtKB" id="P01008"/>
    </source>
</evidence>
<evidence type="ECO:0000255" key="2"/>
<evidence type="ECO:0000255" key="3">
    <source>
        <dbReference type="RuleBase" id="RU000411"/>
    </source>
</evidence>
<evidence type="ECO:0000269" key="4">
    <source>
    </source>
</evidence>
<evidence type="ECO:0000269" key="5">
    <source>
    </source>
</evidence>
<evidence type="ECO:0000303" key="6">
    <source>
    </source>
</evidence>
<evidence type="ECO:0000305" key="7"/>
<evidence type="ECO:0000305" key="8">
    <source>
    </source>
</evidence>
<evidence type="ECO:0000312" key="9">
    <source>
        <dbReference type="EMBL" id="BAA06909.1"/>
    </source>
</evidence>
<reference evidence="9" key="1">
    <citation type="journal article" date="1995" name="J. Biol. Chem.">
        <title>A limulus intracellular coagulation inhibitor type 2. Purification, characterization, cDNA cloning, and tissue localization.</title>
        <authorList>
            <person name="Miura Y."/>
            <person name="Kawabata S."/>
            <person name="Wakamiya Y."/>
            <person name="Nakamura T."/>
            <person name="Iwanaga S."/>
        </authorList>
    </citation>
    <scope>NUCLEOTIDE SEQUENCE [MRNA]</scope>
    <scope>PROTEIN SEQUENCE OF 23-39; 142-147; 171-207; 261-270; 276-302 AND 373-392</scope>
    <scope>FUNCTION</scope>
    <scope>SUBUNIT</scope>
    <scope>SUBCELLULAR LOCATION</scope>
    <scope>TISSUE SPECIFICITY</scope>
    <scope>GLYCOSYLATION AT ASN-174</scope>
    <scope>DISULFIDE BOND</scope>
</reference>
<reference evidence="7" key="2">
    <citation type="journal article" date="1995" name="J. Biol. Chem.">
        <title>Purified horseshoe crab factor G. Reconstitution and characterization of the (1--&gt;3)-beta-D-glucan-sensitive serine protease cascade.</title>
        <authorList>
            <person name="Muta T."/>
            <person name="Seki N."/>
            <person name="Takaki Y."/>
            <person name="Hashimoto R."/>
            <person name="Oda T."/>
            <person name="Iwanaga A."/>
            <person name="Tokunaga F."/>
            <person name="Iwanaga S."/>
        </authorList>
    </citation>
    <scope>FUNCTION</scope>
</reference>
<sequence length="408" mass="46659">MLSRRTLDCCLVMLIVSTTFCQELHFYKEKADRSHENLKTAVNQFGIHLCRRLLNEGKNIIFSPFSLSTALSMAFVGARGNTAIEMRSGLGFREAGLAQEDVPDSFYQAFQLLKSDQSGDKFYVANTALVQNNYNILNSYKRILHRKFYSDIQPVDFVRNGLWVKEMVNKWVSNITHNKITSLIDKPLSPLTRLFLLNAVYFKGSWKTQFDRKRTTLSLFYNNNKVARRVEMMSLTNKFPYTYDSELKCQVLELPYDGDKTSMIFILPEWDVRLKHVENALSAQSVKQLINNLQDTEIVVTIPKFKLENSPQIKEYLQVMGMNEAFSFSADFSGMNGRRNLFVKDVLHKAMIDVNEEGSEAAAVSGVVVMLKSASHNLPTFVANHPFMFLIINKESGMILFLGSVREL</sequence>